<dbReference type="EMBL" id="CH983411">
    <property type="protein sequence ID" value="EDX16436.1"/>
    <property type="molecule type" value="Genomic_DNA"/>
</dbReference>
<dbReference type="SMR" id="B4NTY9"/>
<dbReference type="STRING" id="7240.B4NTY9"/>
<dbReference type="EnsemblMetazoa" id="FBtr0224519">
    <property type="protein sequence ID" value="FBpp0223011"/>
    <property type="gene ID" value="FBgn0195937"/>
</dbReference>
<dbReference type="EnsemblMetazoa" id="XM_016180883.2">
    <property type="protein sequence ID" value="XP_016037887.1"/>
    <property type="gene ID" value="LOC6739959"/>
</dbReference>
<dbReference type="GeneID" id="6739959"/>
<dbReference type="KEGG" id="dsi:Dsimw501_GD24609"/>
<dbReference type="CTD" id="31243"/>
<dbReference type="HOGENOM" id="CLU_034595_0_0_1"/>
<dbReference type="OMA" id="ICQGDHF"/>
<dbReference type="OrthoDB" id="639027at2759"/>
<dbReference type="PhylomeDB" id="B4NTY9"/>
<dbReference type="Proteomes" id="UP000000304">
    <property type="component" value="Unassembled WGS sequence"/>
</dbReference>
<dbReference type="Bgee" id="FBgn0195937">
    <property type="expression patterns" value="Expressed in embryo and 3 other cell types or tissues"/>
</dbReference>
<dbReference type="GO" id="GO:0016282">
    <property type="term" value="C:eukaryotic 43S preinitiation complex"/>
    <property type="evidence" value="ECO:0007669"/>
    <property type="project" value="UniProtKB-UniRule"/>
</dbReference>
<dbReference type="GO" id="GO:0033290">
    <property type="term" value="C:eukaryotic 48S preinitiation complex"/>
    <property type="evidence" value="ECO:0007669"/>
    <property type="project" value="UniProtKB-UniRule"/>
</dbReference>
<dbReference type="GO" id="GO:0005852">
    <property type="term" value="C:eukaryotic translation initiation factor 3 complex"/>
    <property type="evidence" value="ECO:0007669"/>
    <property type="project" value="UniProtKB-UniRule"/>
</dbReference>
<dbReference type="GO" id="GO:0003723">
    <property type="term" value="F:RNA binding"/>
    <property type="evidence" value="ECO:0007669"/>
    <property type="project" value="UniProtKB-UniRule"/>
</dbReference>
<dbReference type="GO" id="GO:0003743">
    <property type="term" value="F:translation initiation factor activity"/>
    <property type="evidence" value="ECO:0007669"/>
    <property type="project" value="UniProtKB-UniRule"/>
</dbReference>
<dbReference type="GO" id="GO:0001732">
    <property type="term" value="P:formation of cytoplasmic translation initiation complex"/>
    <property type="evidence" value="ECO:0007669"/>
    <property type="project" value="UniProtKB-UniRule"/>
</dbReference>
<dbReference type="CDD" id="cd12933">
    <property type="entry name" value="eIF3G"/>
    <property type="match status" value="1"/>
</dbReference>
<dbReference type="CDD" id="cd12408">
    <property type="entry name" value="RRM_eIF3G_like"/>
    <property type="match status" value="1"/>
</dbReference>
<dbReference type="FunFam" id="3.30.70.330:FF:000828">
    <property type="entry name" value="Eukaryotic translation initiation factor 3 subunit G"/>
    <property type="match status" value="1"/>
</dbReference>
<dbReference type="Gene3D" id="3.30.70.330">
    <property type="match status" value="1"/>
</dbReference>
<dbReference type="HAMAP" id="MF_03006">
    <property type="entry name" value="eIF3g"/>
    <property type="match status" value="1"/>
</dbReference>
<dbReference type="InterPro" id="IPR017334">
    <property type="entry name" value="eIF3_g"/>
</dbReference>
<dbReference type="InterPro" id="IPR024675">
    <property type="entry name" value="eIF3g_N"/>
</dbReference>
<dbReference type="InterPro" id="IPR034240">
    <property type="entry name" value="eIF3G_RRM"/>
</dbReference>
<dbReference type="InterPro" id="IPR012677">
    <property type="entry name" value="Nucleotide-bd_a/b_plait_sf"/>
</dbReference>
<dbReference type="InterPro" id="IPR035979">
    <property type="entry name" value="RBD_domain_sf"/>
</dbReference>
<dbReference type="InterPro" id="IPR000504">
    <property type="entry name" value="RRM_dom"/>
</dbReference>
<dbReference type="PANTHER" id="PTHR10352">
    <property type="entry name" value="EUKARYOTIC TRANSLATION INITIATION FACTOR 3 SUBUNIT G"/>
    <property type="match status" value="1"/>
</dbReference>
<dbReference type="Pfam" id="PF12353">
    <property type="entry name" value="eIF3g"/>
    <property type="match status" value="1"/>
</dbReference>
<dbReference type="Pfam" id="PF00076">
    <property type="entry name" value="RRM_1"/>
    <property type="match status" value="1"/>
</dbReference>
<dbReference type="PIRSF" id="PIRSF037949">
    <property type="entry name" value="Transl_init_eIF-3_RNA-bind"/>
    <property type="match status" value="1"/>
</dbReference>
<dbReference type="SMART" id="SM00360">
    <property type="entry name" value="RRM"/>
    <property type="match status" value="1"/>
</dbReference>
<dbReference type="SUPFAM" id="SSF54928">
    <property type="entry name" value="RNA-binding domain, RBD"/>
    <property type="match status" value="1"/>
</dbReference>
<dbReference type="PROSITE" id="PS50102">
    <property type="entry name" value="RRM"/>
    <property type="match status" value="1"/>
</dbReference>
<name>EI3G1_DROSI</name>
<keyword id="KW-0963">Cytoplasm</keyword>
<keyword id="KW-0396">Initiation factor</keyword>
<keyword id="KW-0648">Protein biosynthesis</keyword>
<keyword id="KW-1185">Reference proteome</keyword>
<keyword id="KW-0694">RNA-binding</keyword>
<comment type="function">
    <text evidence="2">RNA-binding component of the eukaryotic translation initiation factor 3 (eIF-3) complex, which is involved in protein synthesis of a specialized repertoire of mRNAs and, together with other initiation factors, stimulates binding of mRNA and methionyl-tRNAi to the 40S ribosome. The eIF-3 complex specifically targets and initiates translation of a subset of mRNAs involved in cell proliferation. This subunit can bind 18S rRNA.</text>
</comment>
<comment type="subunit">
    <text evidence="2">Component of the eukaryotic translation initiation factor 3 (eIF-3) complex. The eIF-3 complex interacts with pix.</text>
</comment>
<comment type="subcellular location">
    <subcellularLocation>
        <location evidence="2">Cytoplasm</location>
    </subcellularLocation>
</comment>
<comment type="similarity">
    <text evidence="2">Belongs to the eIF-3 subunit G family.</text>
</comment>
<proteinExistence type="inferred from homology"/>
<feature type="chain" id="PRO_0000365423" description="Eukaryotic translation initiation factor 3 subunit G-1">
    <location>
        <begin position="1"/>
        <end position="269"/>
    </location>
</feature>
<feature type="domain" description="RRM" evidence="2">
    <location>
        <begin position="188"/>
        <end position="266"/>
    </location>
</feature>
<gene>
    <name evidence="1" type="primary">eIF3g1</name>
    <name evidence="2" type="synonym">eIF3-S4</name>
    <name evidence="1" type="synonym">eIF3ga</name>
    <name type="ORF">GD24609</name>
</gene>
<reference key="1">
    <citation type="journal article" date="2007" name="Nature">
        <title>Evolution of genes and genomes on the Drosophila phylogeny.</title>
        <authorList>
            <consortium name="Drosophila 12 genomes consortium"/>
        </authorList>
    </citation>
    <scope>NUCLEOTIDE SEQUENCE [LARGE SCALE GENOMIC DNA]</scope>
</reference>
<sequence>MPGVETIKSSWADEVELDYGGLPPTTETVENGQKYVTEYKYNKDDKKTKVVRTYKISKQVVPKTVAKRRTWTKFGESKNDKPGPNSQTTMVSEEIFMQFLNSKEDEKANDPLLDPTKNIAKCRICNGEHWSVNCPYKGTAMDTNMMEKKASAAAAAAVDAPKSGKYVPPFLKDSQKGALGMRGRDDTAAIRISNLSESMTEADLEELVKKIGPQSKMYLARDKNTGLCKGFAYVHFKQRKDAAAAIEILNGHGYDHLILSVEWSKPQNN</sequence>
<organism>
    <name type="scientific">Drosophila simulans</name>
    <name type="common">Fruit fly</name>
    <dbReference type="NCBI Taxonomy" id="7240"/>
    <lineage>
        <taxon>Eukaryota</taxon>
        <taxon>Metazoa</taxon>
        <taxon>Ecdysozoa</taxon>
        <taxon>Arthropoda</taxon>
        <taxon>Hexapoda</taxon>
        <taxon>Insecta</taxon>
        <taxon>Pterygota</taxon>
        <taxon>Neoptera</taxon>
        <taxon>Endopterygota</taxon>
        <taxon>Diptera</taxon>
        <taxon>Brachycera</taxon>
        <taxon>Muscomorpha</taxon>
        <taxon>Ephydroidea</taxon>
        <taxon>Drosophilidae</taxon>
        <taxon>Drosophila</taxon>
        <taxon>Sophophora</taxon>
    </lineage>
</organism>
<evidence type="ECO:0000250" key="1">
    <source>
        <dbReference type="UniProtKB" id="Q9W4X7"/>
    </source>
</evidence>
<evidence type="ECO:0000255" key="2">
    <source>
        <dbReference type="HAMAP-Rule" id="MF_03006"/>
    </source>
</evidence>
<accession>B4NTY9</accession>
<protein>
    <recommendedName>
        <fullName evidence="1">Eukaryotic translation initiation factor 3 subunit G-1</fullName>
    </recommendedName>
    <alternativeName>
        <fullName evidence="2">Eukaryotic translation initiation factor 3 RNA-binding subunit 1</fullName>
        <shortName evidence="2">eIF-3 RNA-binding subunit 1</shortName>
    </alternativeName>
    <alternativeName>
        <fullName evidence="2">Eukaryotic translation initiation factor 3 subunit 4-1</fullName>
    </alternativeName>
</protein>